<accession>B1KTE0</accession>
<name>PRSA_CLOBM</name>
<gene>
    <name evidence="1" type="primary">prsA</name>
    <name type="ordered locus">CLK_3007</name>
</gene>
<dbReference type="EC" id="5.2.1.8" evidence="1"/>
<dbReference type="EMBL" id="CP000962">
    <property type="protein sequence ID" value="ACA55931.1"/>
    <property type="molecule type" value="Genomic_DNA"/>
</dbReference>
<dbReference type="RefSeq" id="WP_012343852.1">
    <property type="nucleotide sequence ID" value="NC_010520.1"/>
</dbReference>
<dbReference type="SMR" id="B1KTE0"/>
<dbReference type="KEGG" id="cbl:CLK_3007"/>
<dbReference type="HOGENOM" id="CLU_034646_5_2_9"/>
<dbReference type="GO" id="GO:0005886">
    <property type="term" value="C:plasma membrane"/>
    <property type="evidence" value="ECO:0007669"/>
    <property type="project" value="UniProtKB-SubCell"/>
</dbReference>
<dbReference type="GO" id="GO:0003755">
    <property type="term" value="F:peptidyl-prolyl cis-trans isomerase activity"/>
    <property type="evidence" value="ECO:0007669"/>
    <property type="project" value="UniProtKB-UniRule"/>
</dbReference>
<dbReference type="GO" id="GO:0006457">
    <property type="term" value="P:protein folding"/>
    <property type="evidence" value="ECO:0007669"/>
    <property type="project" value="UniProtKB-UniRule"/>
</dbReference>
<dbReference type="Gene3D" id="3.10.50.40">
    <property type="match status" value="1"/>
</dbReference>
<dbReference type="Gene3D" id="1.10.4030.10">
    <property type="entry name" value="Porin chaperone SurA, peptide-binding domain"/>
    <property type="match status" value="1"/>
</dbReference>
<dbReference type="HAMAP" id="MF_01145">
    <property type="entry name" value="Foldase_PrsA"/>
    <property type="match status" value="1"/>
</dbReference>
<dbReference type="InterPro" id="IPR023059">
    <property type="entry name" value="Foldase_PrsA"/>
</dbReference>
<dbReference type="InterPro" id="IPR046357">
    <property type="entry name" value="PPIase_dom_sf"/>
</dbReference>
<dbReference type="InterPro" id="IPR000297">
    <property type="entry name" value="PPIase_PpiC"/>
</dbReference>
<dbReference type="InterPro" id="IPR023058">
    <property type="entry name" value="PPIase_PpiC_CS"/>
</dbReference>
<dbReference type="InterPro" id="IPR050245">
    <property type="entry name" value="PrsA_foldase"/>
</dbReference>
<dbReference type="InterPro" id="IPR027304">
    <property type="entry name" value="Trigger_fact/SurA_dom_sf"/>
</dbReference>
<dbReference type="NCBIfam" id="NF000809">
    <property type="entry name" value="PRK00059.1"/>
    <property type="match status" value="1"/>
</dbReference>
<dbReference type="PANTHER" id="PTHR47245:SF1">
    <property type="entry name" value="FOLDASE PROTEIN PRSA"/>
    <property type="match status" value="1"/>
</dbReference>
<dbReference type="PANTHER" id="PTHR47245">
    <property type="entry name" value="PEPTIDYLPROLYL ISOMERASE"/>
    <property type="match status" value="1"/>
</dbReference>
<dbReference type="Pfam" id="PF13145">
    <property type="entry name" value="Rotamase_2"/>
    <property type="match status" value="1"/>
</dbReference>
<dbReference type="Pfam" id="PF13624">
    <property type="entry name" value="SurA_N_3"/>
    <property type="match status" value="1"/>
</dbReference>
<dbReference type="SUPFAM" id="SSF54534">
    <property type="entry name" value="FKBP-like"/>
    <property type="match status" value="1"/>
</dbReference>
<dbReference type="SUPFAM" id="SSF109998">
    <property type="entry name" value="Triger factor/SurA peptide-binding domain-like"/>
    <property type="match status" value="1"/>
</dbReference>
<dbReference type="PROSITE" id="PS01096">
    <property type="entry name" value="PPIC_PPIASE_1"/>
    <property type="match status" value="1"/>
</dbReference>
<dbReference type="PROSITE" id="PS50198">
    <property type="entry name" value="PPIC_PPIASE_2"/>
    <property type="match status" value="1"/>
</dbReference>
<dbReference type="PROSITE" id="PS51257">
    <property type="entry name" value="PROKAR_LIPOPROTEIN"/>
    <property type="match status" value="1"/>
</dbReference>
<reference key="1">
    <citation type="journal article" date="2007" name="PLoS ONE">
        <title>Analysis of the neurotoxin complex genes in Clostridium botulinum A1-A4 and B1 strains: BoNT/A3, /Ba4 and /B1 clusters are located within plasmids.</title>
        <authorList>
            <person name="Smith T.J."/>
            <person name="Hill K.K."/>
            <person name="Foley B.T."/>
            <person name="Detter J.C."/>
            <person name="Munk A.C."/>
            <person name="Bruce D.C."/>
            <person name="Doggett N.A."/>
            <person name="Smith L.A."/>
            <person name="Marks J.D."/>
            <person name="Xie G."/>
            <person name="Brettin T.S."/>
        </authorList>
    </citation>
    <scope>NUCLEOTIDE SEQUENCE [LARGE SCALE GENOMIC DNA]</scope>
    <source>
        <strain>Loch Maree / Type A3</strain>
    </source>
</reference>
<proteinExistence type="inferred from homology"/>
<organism>
    <name type="scientific">Clostridium botulinum (strain Loch Maree / Type A3)</name>
    <dbReference type="NCBI Taxonomy" id="498214"/>
    <lineage>
        <taxon>Bacteria</taxon>
        <taxon>Bacillati</taxon>
        <taxon>Bacillota</taxon>
        <taxon>Clostridia</taxon>
        <taxon>Eubacteriales</taxon>
        <taxon>Clostridiaceae</taxon>
        <taxon>Clostridium</taxon>
    </lineage>
</organism>
<sequence length="335" mass="38454">MRSAKKLLSVLCLGVFILTFTACDMVEKTPEAKAKSTIAKVNGEKIQRKDLDENPRFKQVVSQMKMQYGEEFEKSEQGKEVIKEQKSQILDELITEKVLLQKGKELKVIPKDEELNKEADKKVNEIKAVYNNDEKKFEETLKSTGFTKETLKEYLKDQIVIEKVINEATKGVKVEDKDAQKYYNENQSMFTEKPNTMNVSHILVKTEDEAKKVKKRLDAKEDFAKVAKEVSQDGSKDKGGLLGDISYSDSNLDPTFLKAAIALKEGAISNPVHTQFGYHIIKINSKKEYPVKKFDAVKEDIKKQLKQEKQQEAYTKKIEEWKKASKIKIYEKNLL</sequence>
<protein>
    <recommendedName>
        <fullName evidence="1">Foldase protein PrsA</fullName>
        <ecNumber evidence="1">5.2.1.8</ecNumber>
    </recommendedName>
</protein>
<comment type="function">
    <text evidence="1">Plays a major role in protein secretion by helping the post-translocational extracellular folding of several secreted proteins.</text>
</comment>
<comment type="catalytic activity">
    <reaction evidence="1">
        <text>[protein]-peptidylproline (omega=180) = [protein]-peptidylproline (omega=0)</text>
        <dbReference type="Rhea" id="RHEA:16237"/>
        <dbReference type="Rhea" id="RHEA-COMP:10747"/>
        <dbReference type="Rhea" id="RHEA-COMP:10748"/>
        <dbReference type="ChEBI" id="CHEBI:83833"/>
        <dbReference type="ChEBI" id="CHEBI:83834"/>
        <dbReference type="EC" id="5.2.1.8"/>
    </reaction>
</comment>
<comment type="subcellular location">
    <subcellularLocation>
        <location evidence="1">Cell membrane</location>
        <topology evidence="1">Lipid-anchor</topology>
    </subcellularLocation>
</comment>
<comment type="similarity">
    <text evidence="1">Belongs to the PrsA family.</text>
</comment>
<keyword id="KW-1003">Cell membrane</keyword>
<keyword id="KW-0413">Isomerase</keyword>
<keyword id="KW-0449">Lipoprotein</keyword>
<keyword id="KW-0472">Membrane</keyword>
<keyword id="KW-0564">Palmitate</keyword>
<keyword id="KW-0697">Rotamase</keyword>
<keyword id="KW-0732">Signal</keyword>
<evidence type="ECO:0000255" key="1">
    <source>
        <dbReference type="HAMAP-Rule" id="MF_01145"/>
    </source>
</evidence>
<feature type="signal peptide" evidence="1">
    <location>
        <begin position="1"/>
        <end position="22"/>
    </location>
</feature>
<feature type="chain" id="PRO_1000137382" description="Foldase protein PrsA">
    <location>
        <begin position="23"/>
        <end position="335"/>
    </location>
</feature>
<feature type="domain" description="PpiC" evidence="1">
    <location>
        <begin position="194"/>
        <end position="285"/>
    </location>
</feature>
<feature type="lipid moiety-binding region" description="N-palmitoyl cysteine" evidence="1">
    <location>
        <position position="23"/>
    </location>
</feature>
<feature type="lipid moiety-binding region" description="S-diacylglycerol cysteine" evidence="1">
    <location>
        <position position="23"/>
    </location>
</feature>